<evidence type="ECO:0000255" key="1">
    <source>
        <dbReference type="HAMAP-Rule" id="MF_00235"/>
    </source>
</evidence>
<feature type="chain" id="PRO_1000078290" description="Adenylate kinase">
    <location>
        <begin position="1"/>
        <end position="214"/>
    </location>
</feature>
<feature type="region of interest" description="NMP" evidence="1">
    <location>
        <begin position="30"/>
        <end position="59"/>
    </location>
</feature>
<feature type="region of interest" description="LID" evidence="1">
    <location>
        <begin position="122"/>
        <end position="159"/>
    </location>
</feature>
<feature type="binding site" evidence="1">
    <location>
        <begin position="10"/>
        <end position="15"/>
    </location>
    <ligand>
        <name>ATP</name>
        <dbReference type="ChEBI" id="CHEBI:30616"/>
    </ligand>
</feature>
<feature type="binding site" evidence="1">
    <location>
        <position position="31"/>
    </location>
    <ligand>
        <name>AMP</name>
        <dbReference type="ChEBI" id="CHEBI:456215"/>
    </ligand>
</feature>
<feature type="binding site" evidence="1">
    <location>
        <position position="36"/>
    </location>
    <ligand>
        <name>AMP</name>
        <dbReference type="ChEBI" id="CHEBI:456215"/>
    </ligand>
</feature>
<feature type="binding site" evidence="1">
    <location>
        <begin position="57"/>
        <end position="59"/>
    </location>
    <ligand>
        <name>AMP</name>
        <dbReference type="ChEBI" id="CHEBI:456215"/>
    </ligand>
</feature>
<feature type="binding site" evidence="1">
    <location>
        <begin position="85"/>
        <end position="88"/>
    </location>
    <ligand>
        <name>AMP</name>
        <dbReference type="ChEBI" id="CHEBI:456215"/>
    </ligand>
</feature>
<feature type="binding site" evidence="1">
    <location>
        <position position="92"/>
    </location>
    <ligand>
        <name>AMP</name>
        <dbReference type="ChEBI" id="CHEBI:456215"/>
    </ligand>
</feature>
<feature type="binding site" evidence="1">
    <location>
        <position position="123"/>
    </location>
    <ligand>
        <name>ATP</name>
        <dbReference type="ChEBI" id="CHEBI:30616"/>
    </ligand>
</feature>
<feature type="binding site" evidence="1">
    <location>
        <begin position="132"/>
        <end position="133"/>
    </location>
    <ligand>
        <name>ATP</name>
        <dbReference type="ChEBI" id="CHEBI:30616"/>
    </ligand>
</feature>
<feature type="binding site" evidence="1">
    <location>
        <position position="156"/>
    </location>
    <ligand>
        <name>AMP</name>
        <dbReference type="ChEBI" id="CHEBI:456215"/>
    </ligand>
</feature>
<feature type="binding site" evidence="1">
    <location>
        <position position="167"/>
    </location>
    <ligand>
        <name>AMP</name>
        <dbReference type="ChEBI" id="CHEBI:456215"/>
    </ligand>
</feature>
<feature type="binding site" evidence="1">
    <location>
        <position position="200"/>
    </location>
    <ligand>
        <name>ATP</name>
        <dbReference type="ChEBI" id="CHEBI:30616"/>
    </ligand>
</feature>
<comment type="function">
    <text evidence="1">Catalyzes the reversible transfer of the terminal phosphate group between ATP and AMP. Plays an important role in cellular energy homeostasis and in adenine nucleotide metabolism.</text>
</comment>
<comment type="catalytic activity">
    <reaction evidence="1">
        <text>AMP + ATP = 2 ADP</text>
        <dbReference type="Rhea" id="RHEA:12973"/>
        <dbReference type="ChEBI" id="CHEBI:30616"/>
        <dbReference type="ChEBI" id="CHEBI:456215"/>
        <dbReference type="ChEBI" id="CHEBI:456216"/>
        <dbReference type="EC" id="2.7.4.3"/>
    </reaction>
</comment>
<comment type="pathway">
    <text evidence="1">Purine metabolism; AMP biosynthesis via salvage pathway; AMP from ADP: step 1/1.</text>
</comment>
<comment type="subunit">
    <text evidence="1">Monomer.</text>
</comment>
<comment type="subcellular location">
    <subcellularLocation>
        <location evidence="1">Cytoplasm</location>
    </subcellularLocation>
</comment>
<comment type="domain">
    <text evidence="1">Consists of three domains, a large central CORE domain and two small peripheral domains, NMPbind and LID, which undergo movements during catalysis. The LID domain closes over the site of phosphoryl transfer upon ATP binding. Assembling and dissambling the active center during each catalytic cycle provides an effective means to prevent ATP hydrolysis.</text>
</comment>
<comment type="similarity">
    <text evidence="1">Belongs to the adenylate kinase family.</text>
</comment>
<gene>
    <name evidence="1" type="primary">adk</name>
    <name type="ordered locus">Sbal195_2661</name>
</gene>
<dbReference type="EC" id="2.7.4.3" evidence="1"/>
<dbReference type="EMBL" id="CP000891">
    <property type="protein sequence ID" value="ABX49829.1"/>
    <property type="molecule type" value="Genomic_DNA"/>
</dbReference>
<dbReference type="RefSeq" id="WP_006082054.1">
    <property type="nucleotide sequence ID" value="NC_009997.1"/>
</dbReference>
<dbReference type="SMR" id="A9L567"/>
<dbReference type="GeneID" id="11772751"/>
<dbReference type="KEGG" id="sbn:Sbal195_2661"/>
<dbReference type="HOGENOM" id="CLU_032354_1_2_6"/>
<dbReference type="UniPathway" id="UPA00588">
    <property type="reaction ID" value="UER00649"/>
</dbReference>
<dbReference type="Proteomes" id="UP000000770">
    <property type="component" value="Chromosome"/>
</dbReference>
<dbReference type="GO" id="GO:0005737">
    <property type="term" value="C:cytoplasm"/>
    <property type="evidence" value="ECO:0007669"/>
    <property type="project" value="UniProtKB-SubCell"/>
</dbReference>
<dbReference type="GO" id="GO:0004017">
    <property type="term" value="F:adenylate kinase activity"/>
    <property type="evidence" value="ECO:0007669"/>
    <property type="project" value="UniProtKB-UniRule"/>
</dbReference>
<dbReference type="GO" id="GO:0005524">
    <property type="term" value="F:ATP binding"/>
    <property type="evidence" value="ECO:0007669"/>
    <property type="project" value="UniProtKB-UniRule"/>
</dbReference>
<dbReference type="GO" id="GO:0044209">
    <property type="term" value="P:AMP salvage"/>
    <property type="evidence" value="ECO:0007669"/>
    <property type="project" value="UniProtKB-UniRule"/>
</dbReference>
<dbReference type="CDD" id="cd01428">
    <property type="entry name" value="ADK"/>
    <property type="match status" value="1"/>
</dbReference>
<dbReference type="FunFam" id="3.40.50.300:FF:000106">
    <property type="entry name" value="Adenylate kinase mitochondrial"/>
    <property type="match status" value="1"/>
</dbReference>
<dbReference type="Gene3D" id="3.40.50.300">
    <property type="entry name" value="P-loop containing nucleotide triphosphate hydrolases"/>
    <property type="match status" value="1"/>
</dbReference>
<dbReference type="HAMAP" id="MF_00235">
    <property type="entry name" value="Adenylate_kinase_Adk"/>
    <property type="match status" value="1"/>
</dbReference>
<dbReference type="InterPro" id="IPR006259">
    <property type="entry name" value="Adenyl_kin_sub"/>
</dbReference>
<dbReference type="InterPro" id="IPR000850">
    <property type="entry name" value="Adenylat/UMP-CMP_kin"/>
</dbReference>
<dbReference type="InterPro" id="IPR033690">
    <property type="entry name" value="Adenylat_kinase_CS"/>
</dbReference>
<dbReference type="InterPro" id="IPR007862">
    <property type="entry name" value="Adenylate_kinase_lid-dom"/>
</dbReference>
<dbReference type="InterPro" id="IPR027417">
    <property type="entry name" value="P-loop_NTPase"/>
</dbReference>
<dbReference type="NCBIfam" id="TIGR01351">
    <property type="entry name" value="adk"/>
    <property type="match status" value="1"/>
</dbReference>
<dbReference type="NCBIfam" id="NF001379">
    <property type="entry name" value="PRK00279.1-1"/>
    <property type="match status" value="1"/>
</dbReference>
<dbReference type="NCBIfam" id="NF001380">
    <property type="entry name" value="PRK00279.1-2"/>
    <property type="match status" value="1"/>
</dbReference>
<dbReference type="NCBIfam" id="NF001381">
    <property type="entry name" value="PRK00279.1-3"/>
    <property type="match status" value="1"/>
</dbReference>
<dbReference type="NCBIfam" id="NF011100">
    <property type="entry name" value="PRK14527.1"/>
    <property type="match status" value="1"/>
</dbReference>
<dbReference type="PANTHER" id="PTHR23359">
    <property type="entry name" value="NUCLEOTIDE KINASE"/>
    <property type="match status" value="1"/>
</dbReference>
<dbReference type="Pfam" id="PF00406">
    <property type="entry name" value="ADK"/>
    <property type="match status" value="1"/>
</dbReference>
<dbReference type="Pfam" id="PF05191">
    <property type="entry name" value="ADK_lid"/>
    <property type="match status" value="1"/>
</dbReference>
<dbReference type="PRINTS" id="PR00094">
    <property type="entry name" value="ADENYLTKNASE"/>
</dbReference>
<dbReference type="SUPFAM" id="SSF52540">
    <property type="entry name" value="P-loop containing nucleoside triphosphate hydrolases"/>
    <property type="match status" value="1"/>
</dbReference>
<dbReference type="PROSITE" id="PS00113">
    <property type="entry name" value="ADENYLATE_KINASE"/>
    <property type="match status" value="1"/>
</dbReference>
<sequence>MRIILLGAPGAGKGTQAQFIMEQYGIPQISTGDMLRAAVKAGTPLGLEAKKVMDAGQLVSDDLIIGLVKERIAQEDCVKGFLLDGFPRTIPQADAMAANGISIDHVIEIDVPDEEIVKRMSGRRVHPGSGRVYHVVFNPPKVEGKDDVTGEDLAIRPDDEESTVRKRLAIYHEQTKPLVEYYGKVAAAGQTQYNKFDGTQSVAAVSEQLASVLK</sequence>
<protein>
    <recommendedName>
        <fullName evidence="1">Adenylate kinase</fullName>
        <shortName evidence="1">AK</shortName>
        <ecNumber evidence="1">2.7.4.3</ecNumber>
    </recommendedName>
    <alternativeName>
        <fullName evidence="1">ATP-AMP transphosphorylase</fullName>
    </alternativeName>
    <alternativeName>
        <fullName evidence="1">ATP:AMP phosphotransferase</fullName>
    </alternativeName>
    <alternativeName>
        <fullName evidence="1">Adenylate monophosphate kinase</fullName>
    </alternativeName>
</protein>
<proteinExistence type="inferred from homology"/>
<name>KAD_SHEB9</name>
<accession>A9L567</accession>
<keyword id="KW-0067">ATP-binding</keyword>
<keyword id="KW-0963">Cytoplasm</keyword>
<keyword id="KW-0418">Kinase</keyword>
<keyword id="KW-0545">Nucleotide biosynthesis</keyword>
<keyword id="KW-0547">Nucleotide-binding</keyword>
<keyword id="KW-0808">Transferase</keyword>
<organism>
    <name type="scientific">Shewanella baltica (strain OS195)</name>
    <dbReference type="NCBI Taxonomy" id="399599"/>
    <lineage>
        <taxon>Bacteria</taxon>
        <taxon>Pseudomonadati</taxon>
        <taxon>Pseudomonadota</taxon>
        <taxon>Gammaproteobacteria</taxon>
        <taxon>Alteromonadales</taxon>
        <taxon>Shewanellaceae</taxon>
        <taxon>Shewanella</taxon>
    </lineage>
</organism>
<reference key="1">
    <citation type="submission" date="2007-11" db="EMBL/GenBank/DDBJ databases">
        <title>Complete sequence of chromosome of Shewanella baltica OS195.</title>
        <authorList>
            <consortium name="US DOE Joint Genome Institute"/>
            <person name="Copeland A."/>
            <person name="Lucas S."/>
            <person name="Lapidus A."/>
            <person name="Barry K."/>
            <person name="Glavina del Rio T."/>
            <person name="Dalin E."/>
            <person name="Tice H."/>
            <person name="Pitluck S."/>
            <person name="Chain P."/>
            <person name="Malfatti S."/>
            <person name="Shin M."/>
            <person name="Vergez L."/>
            <person name="Schmutz J."/>
            <person name="Larimer F."/>
            <person name="Land M."/>
            <person name="Hauser L."/>
            <person name="Kyrpides N."/>
            <person name="Kim E."/>
            <person name="Brettar I."/>
            <person name="Rodrigues J."/>
            <person name="Konstantinidis K."/>
            <person name="Klappenbach J."/>
            <person name="Hofle M."/>
            <person name="Tiedje J."/>
            <person name="Richardson P."/>
        </authorList>
    </citation>
    <scope>NUCLEOTIDE SEQUENCE [LARGE SCALE GENOMIC DNA]</scope>
    <source>
        <strain>OS195</strain>
    </source>
</reference>